<organism>
    <name type="scientific">Legionella pneumophila (strain Corby)</name>
    <dbReference type="NCBI Taxonomy" id="400673"/>
    <lineage>
        <taxon>Bacteria</taxon>
        <taxon>Pseudomonadati</taxon>
        <taxon>Pseudomonadota</taxon>
        <taxon>Gammaproteobacteria</taxon>
        <taxon>Legionellales</taxon>
        <taxon>Legionellaceae</taxon>
        <taxon>Legionella</taxon>
    </lineage>
</organism>
<proteinExistence type="inferred from homology"/>
<reference key="1">
    <citation type="submission" date="2006-11" db="EMBL/GenBank/DDBJ databases">
        <title>Identification and characterization of a new conjugation/ type IVA secretion system (trb/tra) of L. pneumophila Corby localized on a mobile genomic island.</title>
        <authorList>
            <person name="Gloeckner G."/>
            <person name="Albert-Weissenberger C."/>
            <person name="Weinmann E."/>
            <person name="Jacobi S."/>
            <person name="Schunder E."/>
            <person name="Steinert M."/>
            <person name="Buchrieser C."/>
            <person name="Hacker J."/>
            <person name="Heuner K."/>
        </authorList>
    </citation>
    <scope>NUCLEOTIDE SEQUENCE [LARGE SCALE GENOMIC DNA]</scope>
    <source>
        <strain>Corby</strain>
    </source>
</reference>
<feature type="chain" id="PRO_1000051643" description="L-threonine 3-dehydrogenase">
    <location>
        <begin position="1"/>
        <end position="340"/>
    </location>
</feature>
<feature type="active site" description="Charge relay system" evidence="1">
    <location>
        <position position="40"/>
    </location>
</feature>
<feature type="active site" description="Charge relay system" evidence="1">
    <location>
        <position position="43"/>
    </location>
</feature>
<feature type="binding site" evidence="1">
    <location>
        <position position="38"/>
    </location>
    <ligand>
        <name>Zn(2+)</name>
        <dbReference type="ChEBI" id="CHEBI:29105"/>
        <label>1</label>
        <note>catalytic</note>
    </ligand>
</feature>
<feature type="binding site" evidence="1">
    <location>
        <position position="63"/>
    </location>
    <ligand>
        <name>Zn(2+)</name>
        <dbReference type="ChEBI" id="CHEBI:29105"/>
        <label>1</label>
        <note>catalytic</note>
    </ligand>
</feature>
<feature type="binding site" evidence="1">
    <location>
        <position position="64"/>
    </location>
    <ligand>
        <name>Zn(2+)</name>
        <dbReference type="ChEBI" id="CHEBI:29105"/>
        <label>1</label>
        <note>catalytic</note>
    </ligand>
</feature>
<feature type="binding site" evidence="1">
    <location>
        <position position="93"/>
    </location>
    <ligand>
        <name>Zn(2+)</name>
        <dbReference type="ChEBI" id="CHEBI:29105"/>
        <label>2</label>
    </ligand>
</feature>
<feature type="binding site" evidence="1">
    <location>
        <position position="96"/>
    </location>
    <ligand>
        <name>Zn(2+)</name>
        <dbReference type="ChEBI" id="CHEBI:29105"/>
        <label>2</label>
    </ligand>
</feature>
<feature type="binding site" evidence="1">
    <location>
        <position position="99"/>
    </location>
    <ligand>
        <name>Zn(2+)</name>
        <dbReference type="ChEBI" id="CHEBI:29105"/>
        <label>2</label>
    </ligand>
</feature>
<feature type="binding site" evidence="1">
    <location>
        <position position="107"/>
    </location>
    <ligand>
        <name>Zn(2+)</name>
        <dbReference type="ChEBI" id="CHEBI:29105"/>
        <label>2</label>
    </ligand>
</feature>
<feature type="binding site" evidence="1">
    <location>
        <position position="175"/>
    </location>
    <ligand>
        <name>NAD(+)</name>
        <dbReference type="ChEBI" id="CHEBI:57540"/>
    </ligand>
</feature>
<feature type="binding site" evidence="1">
    <location>
        <position position="195"/>
    </location>
    <ligand>
        <name>NAD(+)</name>
        <dbReference type="ChEBI" id="CHEBI:57540"/>
    </ligand>
</feature>
<feature type="binding site" evidence="1">
    <location>
        <position position="200"/>
    </location>
    <ligand>
        <name>NAD(+)</name>
        <dbReference type="ChEBI" id="CHEBI:57540"/>
    </ligand>
</feature>
<feature type="binding site" evidence="1">
    <location>
        <begin position="262"/>
        <end position="264"/>
    </location>
    <ligand>
        <name>NAD(+)</name>
        <dbReference type="ChEBI" id="CHEBI:57540"/>
    </ligand>
</feature>
<feature type="binding site" evidence="1">
    <location>
        <begin position="286"/>
        <end position="287"/>
    </location>
    <ligand>
        <name>NAD(+)</name>
        <dbReference type="ChEBI" id="CHEBI:57540"/>
    </ligand>
</feature>
<feature type="site" description="Important for catalytic activity for the proton relay mechanism but does not participate directly in the coordination of zinc atom" evidence="1">
    <location>
        <position position="148"/>
    </location>
</feature>
<comment type="function">
    <text evidence="1">Catalyzes the NAD(+)-dependent oxidation of L-threonine to 2-amino-3-ketobutyrate.</text>
</comment>
<comment type="catalytic activity">
    <reaction evidence="1">
        <text>L-threonine + NAD(+) = (2S)-2-amino-3-oxobutanoate + NADH + H(+)</text>
        <dbReference type="Rhea" id="RHEA:13161"/>
        <dbReference type="ChEBI" id="CHEBI:15378"/>
        <dbReference type="ChEBI" id="CHEBI:57540"/>
        <dbReference type="ChEBI" id="CHEBI:57926"/>
        <dbReference type="ChEBI" id="CHEBI:57945"/>
        <dbReference type="ChEBI" id="CHEBI:78948"/>
        <dbReference type="EC" id="1.1.1.103"/>
    </reaction>
</comment>
<comment type="cofactor">
    <cofactor evidence="1">
        <name>Zn(2+)</name>
        <dbReference type="ChEBI" id="CHEBI:29105"/>
    </cofactor>
    <text evidence="1">Binds 2 Zn(2+) ions per subunit.</text>
</comment>
<comment type="pathway">
    <text evidence="1">Amino-acid degradation; L-threonine degradation via oxydo-reductase pathway; glycine from L-threonine: step 1/2.</text>
</comment>
<comment type="subunit">
    <text evidence="1">Homotetramer.</text>
</comment>
<comment type="subcellular location">
    <subcellularLocation>
        <location evidence="1">Cytoplasm</location>
    </subcellularLocation>
</comment>
<comment type="similarity">
    <text evidence="1">Belongs to the zinc-containing alcohol dehydrogenase family.</text>
</comment>
<dbReference type="EC" id="1.1.1.103" evidence="1"/>
<dbReference type="EMBL" id="CP000675">
    <property type="protein sequence ID" value="ABQ56507.1"/>
    <property type="molecule type" value="Genomic_DNA"/>
</dbReference>
<dbReference type="RefSeq" id="WP_011945851.1">
    <property type="nucleotide sequence ID" value="NC_009494.2"/>
</dbReference>
<dbReference type="SMR" id="A5IGK7"/>
<dbReference type="KEGG" id="lpc:LPC_2592"/>
<dbReference type="HOGENOM" id="CLU_026673_11_0_6"/>
<dbReference type="UniPathway" id="UPA00046">
    <property type="reaction ID" value="UER00505"/>
</dbReference>
<dbReference type="GO" id="GO:0005737">
    <property type="term" value="C:cytoplasm"/>
    <property type="evidence" value="ECO:0007669"/>
    <property type="project" value="UniProtKB-SubCell"/>
</dbReference>
<dbReference type="GO" id="GO:0008743">
    <property type="term" value="F:L-threonine 3-dehydrogenase activity"/>
    <property type="evidence" value="ECO:0007669"/>
    <property type="project" value="UniProtKB-UniRule"/>
</dbReference>
<dbReference type="GO" id="GO:0008270">
    <property type="term" value="F:zinc ion binding"/>
    <property type="evidence" value="ECO:0007669"/>
    <property type="project" value="UniProtKB-UniRule"/>
</dbReference>
<dbReference type="GO" id="GO:0019518">
    <property type="term" value="P:L-threonine catabolic process to glycine"/>
    <property type="evidence" value="ECO:0007669"/>
    <property type="project" value="UniProtKB-UniPathway"/>
</dbReference>
<dbReference type="Gene3D" id="3.90.180.10">
    <property type="entry name" value="Medium-chain alcohol dehydrogenases, catalytic domain"/>
    <property type="match status" value="1"/>
</dbReference>
<dbReference type="Gene3D" id="3.40.50.720">
    <property type="entry name" value="NAD(P)-binding Rossmann-like Domain"/>
    <property type="match status" value="1"/>
</dbReference>
<dbReference type="HAMAP" id="MF_00627">
    <property type="entry name" value="Thr_dehydrog"/>
    <property type="match status" value="1"/>
</dbReference>
<dbReference type="InterPro" id="IPR013149">
    <property type="entry name" value="ADH-like_C"/>
</dbReference>
<dbReference type="InterPro" id="IPR013154">
    <property type="entry name" value="ADH-like_N"/>
</dbReference>
<dbReference type="InterPro" id="IPR002328">
    <property type="entry name" value="ADH_Zn_CS"/>
</dbReference>
<dbReference type="InterPro" id="IPR011032">
    <property type="entry name" value="GroES-like_sf"/>
</dbReference>
<dbReference type="InterPro" id="IPR004627">
    <property type="entry name" value="L-Threonine_3-DHase"/>
</dbReference>
<dbReference type="InterPro" id="IPR036291">
    <property type="entry name" value="NAD(P)-bd_dom_sf"/>
</dbReference>
<dbReference type="InterPro" id="IPR020843">
    <property type="entry name" value="PKS_ER"/>
</dbReference>
<dbReference type="InterPro" id="IPR050129">
    <property type="entry name" value="Zn_alcohol_dh"/>
</dbReference>
<dbReference type="NCBIfam" id="NF003808">
    <property type="entry name" value="PRK05396.1"/>
    <property type="match status" value="1"/>
</dbReference>
<dbReference type="NCBIfam" id="TIGR00692">
    <property type="entry name" value="tdh"/>
    <property type="match status" value="1"/>
</dbReference>
<dbReference type="PANTHER" id="PTHR43401">
    <property type="entry name" value="L-THREONINE 3-DEHYDROGENASE"/>
    <property type="match status" value="1"/>
</dbReference>
<dbReference type="PANTHER" id="PTHR43401:SF2">
    <property type="entry name" value="L-THREONINE 3-DEHYDROGENASE"/>
    <property type="match status" value="1"/>
</dbReference>
<dbReference type="Pfam" id="PF08240">
    <property type="entry name" value="ADH_N"/>
    <property type="match status" value="1"/>
</dbReference>
<dbReference type="Pfam" id="PF00107">
    <property type="entry name" value="ADH_zinc_N"/>
    <property type="match status" value="1"/>
</dbReference>
<dbReference type="SMART" id="SM00829">
    <property type="entry name" value="PKS_ER"/>
    <property type="match status" value="1"/>
</dbReference>
<dbReference type="SUPFAM" id="SSF50129">
    <property type="entry name" value="GroES-like"/>
    <property type="match status" value="1"/>
</dbReference>
<dbReference type="SUPFAM" id="SSF51735">
    <property type="entry name" value="NAD(P)-binding Rossmann-fold domains"/>
    <property type="match status" value="1"/>
</dbReference>
<dbReference type="PROSITE" id="PS00059">
    <property type="entry name" value="ADH_ZINC"/>
    <property type="match status" value="1"/>
</dbReference>
<keyword id="KW-0963">Cytoplasm</keyword>
<keyword id="KW-0479">Metal-binding</keyword>
<keyword id="KW-0520">NAD</keyword>
<keyword id="KW-0560">Oxidoreductase</keyword>
<keyword id="KW-0862">Zinc</keyword>
<name>TDH_LEGPC</name>
<gene>
    <name evidence="1" type="primary">tdh</name>
    <name type="ordered locus">LPC_2592</name>
</gene>
<evidence type="ECO:0000255" key="1">
    <source>
        <dbReference type="HAMAP-Rule" id="MF_00627"/>
    </source>
</evidence>
<sequence length="340" mass="37196">MKSLVKAKKEPGIWMQDVPVPEYGVNDVLIKIKRTAICGTDIHIYSWDEWAQATIPVPMTVGHEFYGEIVEVGKEVQGLKVGQRVSGEGHITCGFCRNCRAGKRHLCRNTLGVGVNRPGCFAEYLALPATNVIALPDNITEEQAAILDPFGNAAHCALAFDVVGEDVLITGAGPIGIMAAAIVRHIGARHVVITDVNDHRLELARQMGVSRAVNVKYQKLSDVANELGMLEGFDVGLEMSGNPMALNDMMKAMNHGGHVALLGIPPQETPIDWNQVIFKGLVIKGIYGREMFETWYKMIAMLQSGLNISPVITHNFPVDEYQHAFQIMASGQSGKVILNW</sequence>
<accession>A5IGK7</accession>
<protein>
    <recommendedName>
        <fullName evidence="1">L-threonine 3-dehydrogenase</fullName>
        <shortName evidence="1">TDH</shortName>
        <ecNumber evidence="1">1.1.1.103</ecNumber>
    </recommendedName>
</protein>